<comment type="function">
    <text evidence="1">This is one of the proteins that binds to the 5S RNA in the ribosome where it forms part of the central protuberance.</text>
</comment>
<comment type="subunit">
    <text evidence="1">Part of the 50S ribosomal subunit; part of the 5S rRNA/L5/L18/L25 subcomplex. Contacts the 5S rRNA. Binds to the 5S rRNA independently of L5 and L18.</text>
</comment>
<comment type="similarity">
    <text evidence="1">Belongs to the bacterial ribosomal protein bL25 family.</text>
</comment>
<evidence type="ECO:0000255" key="1">
    <source>
        <dbReference type="HAMAP-Rule" id="MF_01336"/>
    </source>
</evidence>
<evidence type="ECO:0000305" key="2"/>
<keyword id="KW-1185">Reference proteome</keyword>
<keyword id="KW-0687">Ribonucleoprotein</keyword>
<keyword id="KW-0689">Ribosomal protein</keyword>
<keyword id="KW-0694">RNA-binding</keyword>
<keyword id="KW-0699">rRNA-binding</keyword>
<name>RL25_SHIB3</name>
<organism>
    <name type="scientific">Shigella boydii serotype 18 (strain CDC 3083-94 / BS512)</name>
    <dbReference type="NCBI Taxonomy" id="344609"/>
    <lineage>
        <taxon>Bacteria</taxon>
        <taxon>Pseudomonadati</taxon>
        <taxon>Pseudomonadota</taxon>
        <taxon>Gammaproteobacteria</taxon>
        <taxon>Enterobacterales</taxon>
        <taxon>Enterobacteriaceae</taxon>
        <taxon>Shigella</taxon>
    </lineage>
</organism>
<feature type="chain" id="PRO_1000142599" description="Large ribosomal subunit protein bL25">
    <location>
        <begin position="1"/>
        <end position="94"/>
    </location>
</feature>
<dbReference type="EMBL" id="CP001063">
    <property type="protein sequence ID" value="ACD07891.1"/>
    <property type="molecule type" value="Genomic_DNA"/>
</dbReference>
<dbReference type="RefSeq" id="WP_000494180.1">
    <property type="nucleotide sequence ID" value="NC_010658.1"/>
</dbReference>
<dbReference type="BMRB" id="B2TV63"/>
<dbReference type="SMR" id="B2TV63"/>
<dbReference type="STRING" id="344609.SbBS512_E0773"/>
<dbReference type="KEGG" id="sbc:SbBS512_E0773"/>
<dbReference type="HOGENOM" id="CLU_137946_0_0_6"/>
<dbReference type="Proteomes" id="UP000001030">
    <property type="component" value="Chromosome"/>
</dbReference>
<dbReference type="GO" id="GO:0022625">
    <property type="term" value="C:cytosolic large ribosomal subunit"/>
    <property type="evidence" value="ECO:0007669"/>
    <property type="project" value="TreeGrafter"/>
</dbReference>
<dbReference type="GO" id="GO:0008097">
    <property type="term" value="F:5S rRNA binding"/>
    <property type="evidence" value="ECO:0007669"/>
    <property type="project" value="InterPro"/>
</dbReference>
<dbReference type="GO" id="GO:0003735">
    <property type="term" value="F:structural constituent of ribosome"/>
    <property type="evidence" value="ECO:0007669"/>
    <property type="project" value="InterPro"/>
</dbReference>
<dbReference type="GO" id="GO:0006412">
    <property type="term" value="P:translation"/>
    <property type="evidence" value="ECO:0007669"/>
    <property type="project" value="UniProtKB-UniRule"/>
</dbReference>
<dbReference type="CDD" id="cd00495">
    <property type="entry name" value="Ribosomal_L25_TL5_CTC"/>
    <property type="match status" value="1"/>
</dbReference>
<dbReference type="FunFam" id="2.40.240.10:FF:000002">
    <property type="entry name" value="50S ribosomal protein L25"/>
    <property type="match status" value="1"/>
</dbReference>
<dbReference type="Gene3D" id="2.40.240.10">
    <property type="entry name" value="Ribosomal Protein L25, Chain P"/>
    <property type="match status" value="1"/>
</dbReference>
<dbReference type="HAMAP" id="MF_01336">
    <property type="entry name" value="Ribosomal_bL25"/>
    <property type="match status" value="1"/>
</dbReference>
<dbReference type="InterPro" id="IPR020056">
    <property type="entry name" value="Rbsml_bL25/Gln-tRNA_synth_N"/>
</dbReference>
<dbReference type="InterPro" id="IPR011035">
    <property type="entry name" value="Ribosomal_bL25/Gln-tRNA_synth"/>
</dbReference>
<dbReference type="InterPro" id="IPR020055">
    <property type="entry name" value="Ribosomal_bL25_short"/>
</dbReference>
<dbReference type="InterPro" id="IPR029751">
    <property type="entry name" value="Ribosomal_L25_dom"/>
</dbReference>
<dbReference type="InterPro" id="IPR020930">
    <property type="entry name" value="Ribosomal_uL5_bac-type"/>
</dbReference>
<dbReference type="NCBIfam" id="NF004612">
    <property type="entry name" value="PRK05943.1"/>
    <property type="match status" value="1"/>
</dbReference>
<dbReference type="PANTHER" id="PTHR33284">
    <property type="entry name" value="RIBOSOMAL PROTEIN L25/GLN-TRNA SYNTHETASE, ANTI-CODON-BINDING DOMAIN-CONTAINING PROTEIN"/>
    <property type="match status" value="1"/>
</dbReference>
<dbReference type="PANTHER" id="PTHR33284:SF1">
    <property type="entry name" value="RIBOSOMAL PROTEIN L25_GLN-TRNA SYNTHETASE, ANTI-CODON-BINDING DOMAIN-CONTAINING PROTEIN"/>
    <property type="match status" value="1"/>
</dbReference>
<dbReference type="Pfam" id="PF01386">
    <property type="entry name" value="Ribosomal_L25p"/>
    <property type="match status" value="1"/>
</dbReference>
<dbReference type="SUPFAM" id="SSF50715">
    <property type="entry name" value="Ribosomal protein L25-like"/>
    <property type="match status" value="1"/>
</dbReference>
<proteinExistence type="inferred from homology"/>
<reference key="1">
    <citation type="submission" date="2008-05" db="EMBL/GenBank/DDBJ databases">
        <title>Complete sequence of Shigella boydii serotype 18 strain BS512.</title>
        <authorList>
            <person name="Rasko D.A."/>
            <person name="Rosovitz M."/>
            <person name="Maurelli A.T."/>
            <person name="Myers G."/>
            <person name="Seshadri R."/>
            <person name="Cer R."/>
            <person name="Jiang L."/>
            <person name="Ravel J."/>
            <person name="Sebastian Y."/>
        </authorList>
    </citation>
    <scope>NUCLEOTIDE SEQUENCE [LARGE SCALE GENOMIC DNA]</scope>
    <source>
        <strain>CDC 3083-94 / BS512</strain>
    </source>
</reference>
<accession>B2TV63</accession>
<gene>
    <name evidence="1" type="primary">rplY</name>
    <name type="ordered locus">SbBS512_E0773</name>
</gene>
<protein>
    <recommendedName>
        <fullName evidence="1">Large ribosomal subunit protein bL25</fullName>
    </recommendedName>
    <alternativeName>
        <fullName evidence="2">50S ribosomal protein L25</fullName>
    </alternativeName>
</protein>
<sequence length="94" mass="10675">MFTINAEVRKEQGKGASRRLRAANKFPAIIYGGKEAPLAIELDHDKVINMQAKAEFYSEVLTIVVDGKEIKVKAQDVQRHPYKPKLQHIDFVRA</sequence>